<accession>O60320</accession>
<accession>A0PK09</accession>
<organism>
    <name type="scientific">Homo sapiens</name>
    <name type="common">Human</name>
    <dbReference type="NCBI Taxonomy" id="9606"/>
    <lineage>
        <taxon>Eukaryota</taxon>
        <taxon>Metazoa</taxon>
        <taxon>Chordata</taxon>
        <taxon>Craniata</taxon>
        <taxon>Vertebrata</taxon>
        <taxon>Euteleostomi</taxon>
        <taxon>Mammalia</taxon>
        <taxon>Eutheria</taxon>
        <taxon>Euarchontoglires</taxon>
        <taxon>Primates</taxon>
        <taxon>Haplorrhini</taxon>
        <taxon>Catarrhini</taxon>
        <taxon>Hominidae</taxon>
        <taxon>Homo</taxon>
    </lineage>
</organism>
<comment type="subcellular location">
    <subcellularLocation>
        <location evidence="6">Membrane</location>
        <topology evidence="6">Multi-pass membrane protein</topology>
    </subcellularLocation>
</comment>
<comment type="alternative products">
    <event type="alternative splicing"/>
    <isoform>
        <id>O60320-1</id>
        <name>1</name>
        <sequence type="displayed"/>
    </isoform>
    <isoform>
        <id>O60320-2</id>
        <name>2</name>
        <sequence type="described" ref="VSP_030273"/>
    </isoform>
</comment>
<comment type="similarity">
    <text evidence="6">Belongs to the ENTREP family.</text>
</comment>
<comment type="sequence caution" evidence="6">
    <conflict type="frameshift">
        <sequence resource="EMBL" id="BC127817"/>
    </conflict>
</comment>
<comment type="sequence caution" evidence="6">
    <conflict type="frameshift">
        <sequence resource="EMBL" id="BG752856"/>
    </conflict>
</comment>
<name>EREP2_HUMAN</name>
<sequence>MPPAGGPRAPRPAALPRSLSRLRECPGRSRIVLALGATQMALGCLIVAVSFAALALTTSARVRHSCPFWAGFSVLLSGLIGVVSWKRPLSLVITFFMLLSAVCVMLNLAGSILSCQNAQLVNSLEGCQLIKFDSVEVCVCCELQHQSSGCSNLGETLKLNPLQENCNAVRLTLKDLLFSVCALNVLSTIVCALATAMCCMQMVSSDVLQMFLPQRSHPANPTCVTPHGTVLHQTLDFDEFIPPLPPPPYYPPEYTCTPSTEAQRGLHLDFAPSPFGTLYDVAINSPGLLYPAELPPPYEAVVGQPPASQVTSIGQQVAESSSGDPNTSAGFSTPVPADSTSLLVSEGTATPGSSPSPDGPVGAPAPSEPALPPGHVSPEDPGMGSQVQPGPGRVSRSTSDPTLCTSSMAGDASSHRPSCSQDLEAGLSEAVPGSASMSRSATAACRAQLSPAGDPDTWKTDQRPTPEPFPATSKERPRSLVDSKAYADARVLVAKFLEHSHCALPTEAQHMVGAMRLAVTNEERLEEEAVFGADVLDQV</sequence>
<keyword id="KW-0025">Alternative splicing</keyword>
<keyword id="KW-0472">Membrane</keyword>
<keyword id="KW-1267">Proteomics identification</keyword>
<keyword id="KW-1185">Reference proteome</keyword>
<keyword id="KW-0812">Transmembrane</keyword>
<keyword id="KW-1133">Transmembrane helix</keyword>
<feature type="chain" id="PRO_0000314455" description="Protein ENTREP2">
    <location>
        <begin position="1"/>
        <end position="539"/>
    </location>
</feature>
<feature type="transmembrane region" description="Helical" evidence="1">
    <location>
        <begin position="31"/>
        <end position="51"/>
    </location>
</feature>
<feature type="transmembrane region" description="Helical" evidence="1">
    <location>
        <begin position="65"/>
        <end position="85"/>
    </location>
</feature>
<feature type="transmembrane region" description="Helical" evidence="1">
    <location>
        <begin position="89"/>
        <end position="109"/>
    </location>
</feature>
<feature type="transmembrane region" description="Helical" evidence="1">
    <location>
        <begin position="176"/>
        <end position="196"/>
    </location>
</feature>
<feature type="region of interest" description="Disordered" evidence="2">
    <location>
        <begin position="301"/>
        <end position="481"/>
    </location>
</feature>
<feature type="compositionally biased region" description="Polar residues" evidence="2">
    <location>
        <begin position="306"/>
        <end position="331"/>
    </location>
</feature>
<feature type="compositionally biased region" description="Low complexity" evidence="2">
    <location>
        <begin position="347"/>
        <end position="365"/>
    </location>
</feature>
<feature type="compositionally biased region" description="Polar residues" evidence="2">
    <location>
        <begin position="395"/>
        <end position="408"/>
    </location>
</feature>
<feature type="splice variant" id="VSP_030273" description="In isoform 2." evidence="5">
    <location>
        <begin position="1"/>
        <end position="196"/>
    </location>
</feature>
<feature type="sequence variant" id="VAR_059333" description="In dbSNP:rs2292628.">
    <original>G</original>
    <variation>S</variation>
    <location>
        <position position="228"/>
    </location>
</feature>
<feature type="sequence variant" id="VAR_059334" description="In dbSNP:rs2306933.">
    <original>G</original>
    <variation>D</variation>
    <location>
        <position position="314"/>
    </location>
</feature>
<feature type="sequence variant" id="VAR_039544" description="In dbSNP:rs2256277." evidence="3 4">
    <original>H</original>
    <variation>R</variation>
    <location>
        <position position="375"/>
    </location>
</feature>
<feature type="sequence variant" id="VAR_039545" description="In dbSNP:rs2256273." evidence="3 4">
    <original>R</original>
    <variation>H</variation>
    <location>
        <position position="393"/>
    </location>
</feature>
<feature type="sequence variant" id="VAR_059335" description="In dbSNP:rs2279482.">
    <original>V</original>
    <variation>A</variation>
    <location>
        <position position="431"/>
    </location>
</feature>
<proteinExistence type="evidence at protein level"/>
<evidence type="ECO:0000255" key="1"/>
<evidence type="ECO:0000256" key="2">
    <source>
        <dbReference type="SAM" id="MobiDB-lite"/>
    </source>
</evidence>
<evidence type="ECO:0000269" key="3">
    <source>
    </source>
</evidence>
<evidence type="ECO:0000269" key="4">
    <source>
    </source>
</evidence>
<evidence type="ECO:0000303" key="5">
    <source>
    </source>
</evidence>
<evidence type="ECO:0000305" key="6"/>
<evidence type="ECO:0000312" key="7">
    <source>
        <dbReference type="HGNC" id="HGNC:29075"/>
    </source>
</evidence>
<reference key="1">
    <citation type="journal article" date="2006" name="Nature">
        <title>Analysis of the DNA sequence and duplication history of human chromosome 15.</title>
        <authorList>
            <person name="Zody M.C."/>
            <person name="Garber M."/>
            <person name="Sharpe T."/>
            <person name="Young S.K."/>
            <person name="Rowen L."/>
            <person name="O'Neill K."/>
            <person name="Whittaker C.A."/>
            <person name="Kamal M."/>
            <person name="Chang J.L."/>
            <person name="Cuomo C.A."/>
            <person name="Dewar K."/>
            <person name="FitzGerald M.G."/>
            <person name="Kodira C.D."/>
            <person name="Madan A."/>
            <person name="Qin S."/>
            <person name="Yang X."/>
            <person name="Abbasi N."/>
            <person name="Abouelleil A."/>
            <person name="Arachchi H.M."/>
            <person name="Baradarani L."/>
            <person name="Birditt B."/>
            <person name="Bloom S."/>
            <person name="Bloom T."/>
            <person name="Borowsky M.L."/>
            <person name="Burke J."/>
            <person name="Butler J."/>
            <person name="Cook A."/>
            <person name="DeArellano K."/>
            <person name="DeCaprio D."/>
            <person name="Dorris L. III"/>
            <person name="Dors M."/>
            <person name="Eichler E.E."/>
            <person name="Engels R."/>
            <person name="Fahey J."/>
            <person name="Fleetwood P."/>
            <person name="Friedman C."/>
            <person name="Gearin G."/>
            <person name="Hall J.L."/>
            <person name="Hensley G."/>
            <person name="Johnson E."/>
            <person name="Jones C."/>
            <person name="Kamat A."/>
            <person name="Kaur A."/>
            <person name="Locke D.P."/>
            <person name="Madan A."/>
            <person name="Munson G."/>
            <person name="Jaffe D.B."/>
            <person name="Lui A."/>
            <person name="Macdonald P."/>
            <person name="Mauceli E."/>
            <person name="Naylor J.W."/>
            <person name="Nesbitt R."/>
            <person name="Nicol R."/>
            <person name="O'Leary S.B."/>
            <person name="Ratcliffe A."/>
            <person name="Rounsley S."/>
            <person name="She X."/>
            <person name="Sneddon K.M.B."/>
            <person name="Stewart S."/>
            <person name="Sougnez C."/>
            <person name="Stone S.M."/>
            <person name="Topham K."/>
            <person name="Vincent D."/>
            <person name="Wang S."/>
            <person name="Zimmer A.R."/>
            <person name="Birren B.W."/>
            <person name="Hood L."/>
            <person name="Lander E.S."/>
            <person name="Nusbaum C."/>
        </authorList>
    </citation>
    <scope>NUCLEOTIDE SEQUENCE [LARGE SCALE GENOMIC DNA]</scope>
</reference>
<reference key="2">
    <citation type="journal article" date="2004" name="Genome Res.">
        <title>The status, quality, and expansion of the NIH full-length cDNA project: the Mammalian Gene Collection (MGC).</title>
        <authorList>
            <consortium name="The MGC Project Team"/>
        </authorList>
    </citation>
    <scope>NUCLEOTIDE SEQUENCE [LARGE SCALE MRNA] (ISOFORM 2)</scope>
    <scope>NUCLEOTIDE SEQUENCE [LARGE SCALE MRNA] OF 5-218 (ISOFORM 1)</scope>
    <scope>VARIANTS ARG-375 AND HIS-393</scope>
    <source>
        <tissue>Retinal pigment epithelium</tissue>
    </source>
</reference>
<reference key="3">
    <citation type="journal article" date="2006" name="Genome Res.">
        <title>Diversification of transcriptional modulation: large-scale identification and characterization of putative alternative promoters of human genes.</title>
        <authorList>
            <person name="Kimura K."/>
            <person name="Wakamatsu A."/>
            <person name="Suzuki Y."/>
            <person name="Ota T."/>
            <person name="Nishikawa T."/>
            <person name="Yamashita R."/>
            <person name="Yamamoto J."/>
            <person name="Sekine M."/>
            <person name="Tsuritani K."/>
            <person name="Wakaguri H."/>
            <person name="Ishii S."/>
            <person name="Sugiyama T."/>
            <person name="Saito K."/>
            <person name="Isono Y."/>
            <person name="Irie R."/>
            <person name="Kushida N."/>
            <person name="Yoneyama T."/>
            <person name="Otsuka R."/>
            <person name="Kanda K."/>
            <person name="Yokoi T."/>
            <person name="Kondo H."/>
            <person name="Wagatsuma M."/>
            <person name="Murakawa K."/>
            <person name="Ishida S."/>
            <person name="Ishibashi T."/>
            <person name="Takahashi-Fujii A."/>
            <person name="Tanase T."/>
            <person name="Nagai K."/>
            <person name="Kikuchi H."/>
            <person name="Nakai K."/>
            <person name="Isogai T."/>
            <person name="Sugano S."/>
        </authorList>
    </citation>
    <scope>NUCLEOTIDE SEQUENCE [LARGE SCALE MRNA] OF 3-177 (ISOFORM 1)</scope>
    <source>
        <tissue>Amygdala</tissue>
    </source>
</reference>
<reference key="4">
    <citation type="journal article" date="1998" name="DNA Res.">
        <title>Prediction of the coding sequences of unidentified human genes. IX. The complete sequences of 100 new cDNA clones from brain which can code for large proteins in vitro.</title>
        <authorList>
            <person name="Nagase T."/>
            <person name="Ishikawa K."/>
            <person name="Miyajima N."/>
            <person name="Tanaka A."/>
            <person name="Kotani H."/>
            <person name="Nomura N."/>
            <person name="Ohara O."/>
        </authorList>
    </citation>
    <scope>NUCLEOTIDE SEQUENCE [LARGE SCALE MRNA] OF 135-539 (ISOFORM 1)</scope>
    <scope>VARIANTS ARG-375 AND HIS-393</scope>
    <source>
        <tissue>Brain</tissue>
    </source>
</reference>
<dbReference type="EMBL" id="AC102941">
    <property type="status" value="NOT_ANNOTATED_CDS"/>
    <property type="molecule type" value="Genomic_DNA"/>
</dbReference>
<dbReference type="EMBL" id="AC090763">
    <property type="status" value="NOT_ANNOTATED_CDS"/>
    <property type="molecule type" value="Genomic_DNA"/>
</dbReference>
<dbReference type="EMBL" id="AC107980">
    <property type="status" value="NOT_ANNOTATED_CDS"/>
    <property type="molecule type" value="Genomic_DNA"/>
</dbReference>
<dbReference type="EMBL" id="AC061965">
    <property type="status" value="NOT_ANNOTATED_CDS"/>
    <property type="molecule type" value="Genomic_DNA"/>
</dbReference>
<dbReference type="EMBL" id="BG752856">
    <property type="status" value="NOT_ANNOTATED_CDS"/>
    <property type="molecule type" value="mRNA"/>
</dbReference>
<dbReference type="EMBL" id="BC127817">
    <property type="status" value="NOT_ANNOTATED_CDS"/>
    <property type="molecule type" value="mRNA"/>
</dbReference>
<dbReference type="EMBL" id="DA188047">
    <property type="status" value="NOT_ANNOTATED_CDS"/>
    <property type="molecule type" value="mRNA"/>
</dbReference>
<dbReference type="EMBL" id="AB011146">
    <property type="protein sequence ID" value="BAA25500.1"/>
    <property type="molecule type" value="mRNA"/>
</dbReference>
<dbReference type="CCDS" id="CCDS45198.1">
    <molecule id="O60320-1"/>
</dbReference>
<dbReference type="RefSeq" id="NP_056122.1">
    <molecule id="O60320-1"/>
    <property type="nucleotide sequence ID" value="NM_015307.2"/>
</dbReference>
<dbReference type="BioGRID" id="116940">
    <property type="interactions" value="1"/>
</dbReference>
<dbReference type="FunCoup" id="O60320">
    <property type="interactions" value="20"/>
</dbReference>
<dbReference type="STRING" id="9606.ENSP00000261275"/>
<dbReference type="TCDB" id="1.A.37.4.1">
    <property type="family name" value="the cd20 ca(2+) channel (cd20) family"/>
</dbReference>
<dbReference type="iPTMnet" id="O60320"/>
<dbReference type="PhosphoSitePlus" id="O60320"/>
<dbReference type="BioMuta" id="FAM189A1"/>
<dbReference type="MassIVE" id="O60320"/>
<dbReference type="PaxDb" id="9606-ENSP00000261275"/>
<dbReference type="PeptideAtlas" id="O60320"/>
<dbReference type="ProteomicsDB" id="49345">
    <molecule id="O60320-2"/>
</dbReference>
<dbReference type="TopDownProteomics" id="O60320-1">
    <molecule id="O60320-1"/>
</dbReference>
<dbReference type="Antibodypedia" id="2289">
    <property type="antibodies" value="24 antibodies from 9 providers"/>
</dbReference>
<dbReference type="DNASU" id="23359"/>
<dbReference type="Ensembl" id="ENST00000261275.5">
    <molecule id="O60320-1"/>
    <property type="protein sequence ID" value="ENSP00000261275.4"/>
    <property type="gene ID" value="ENSG00000104059.5"/>
</dbReference>
<dbReference type="GeneID" id="23359"/>
<dbReference type="KEGG" id="hsa:23359"/>
<dbReference type="MANE-Select" id="ENST00000261275.5">
    <property type="protein sequence ID" value="ENSP00000261275.4"/>
    <property type="RefSeq nucleotide sequence ID" value="NM_015307.2"/>
    <property type="RefSeq protein sequence ID" value="NP_056122.1"/>
</dbReference>
<dbReference type="UCSC" id="uc010azk.2">
    <molecule id="O60320-1"/>
    <property type="organism name" value="human"/>
</dbReference>
<dbReference type="AGR" id="HGNC:29075"/>
<dbReference type="CTD" id="23359"/>
<dbReference type="DisGeNET" id="23359"/>
<dbReference type="GeneCards" id="ENTREP2"/>
<dbReference type="HGNC" id="HGNC:29075">
    <property type="gene designation" value="ENTREP2"/>
</dbReference>
<dbReference type="HPA" id="ENSG00000104059">
    <property type="expression patterns" value="Tissue enriched (brain)"/>
</dbReference>
<dbReference type="MalaCards" id="ENTREP2"/>
<dbReference type="MIM" id="620052">
    <property type="type" value="gene"/>
</dbReference>
<dbReference type="neXtProt" id="NX_O60320"/>
<dbReference type="OpenTargets" id="ENSG00000104059"/>
<dbReference type="PharmGKB" id="PA165478574"/>
<dbReference type="VEuPathDB" id="HostDB:ENSG00000104059"/>
<dbReference type="eggNOG" id="ENOG502QUMS">
    <property type="taxonomic scope" value="Eukaryota"/>
</dbReference>
<dbReference type="GeneTree" id="ENSGT00530000063335"/>
<dbReference type="HOGENOM" id="CLU_025607_1_1_1"/>
<dbReference type="InParanoid" id="O60320"/>
<dbReference type="OMA" id="QAFHEQT"/>
<dbReference type="PAN-GO" id="O60320">
    <property type="GO annotations" value="0 GO annotations based on evolutionary models"/>
</dbReference>
<dbReference type="PhylomeDB" id="O60320"/>
<dbReference type="TreeFam" id="TF332736"/>
<dbReference type="PathwayCommons" id="O60320"/>
<dbReference type="BioGRID-ORCS" id="23359">
    <property type="hits" value="13 hits in 1147 CRISPR screens"/>
</dbReference>
<dbReference type="ChiTaRS" id="FAM189A1">
    <property type="organism name" value="human"/>
</dbReference>
<dbReference type="GenomeRNAi" id="23359"/>
<dbReference type="Pharos" id="O60320">
    <property type="development level" value="Tdark"/>
</dbReference>
<dbReference type="PRO" id="PR:O60320"/>
<dbReference type="Proteomes" id="UP000005640">
    <property type="component" value="Chromosome 15"/>
</dbReference>
<dbReference type="RNAct" id="O60320">
    <property type="molecule type" value="protein"/>
</dbReference>
<dbReference type="Bgee" id="ENSG00000104059">
    <property type="expression patterns" value="Expressed in primordial germ cell in gonad and 92 other cell types or tissues"/>
</dbReference>
<dbReference type="ExpressionAtlas" id="O60320">
    <property type="expression patterns" value="baseline and differential"/>
</dbReference>
<dbReference type="GO" id="GO:0016020">
    <property type="term" value="C:membrane"/>
    <property type="evidence" value="ECO:0007669"/>
    <property type="project" value="UniProtKB-SubCell"/>
</dbReference>
<dbReference type="InterPro" id="IPR007237">
    <property type="entry name" value="CD20-like"/>
</dbReference>
<dbReference type="InterPro" id="IPR030431">
    <property type="entry name" value="ENTREP1-3"/>
</dbReference>
<dbReference type="PANTHER" id="PTHR17615:SF6">
    <property type="entry name" value="PROTEIN ENTREP2"/>
    <property type="match status" value="1"/>
</dbReference>
<dbReference type="PANTHER" id="PTHR17615">
    <property type="entry name" value="PROTEIN FAM189A"/>
    <property type="match status" value="1"/>
</dbReference>
<dbReference type="Pfam" id="PF04103">
    <property type="entry name" value="CD20"/>
    <property type="match status" value="1"/>
</dbReference>
<gene>
    <name evidence="7" type="primary">ENTREP2</name>
    <name evidence="7" type="synonym">FAM189A1</name>
    <name type="synonym">KIAA0574</name>
    <name type="synonym">TMEM228</name>
</gene>
<protein>
    <recommendedName>
        <fullName evidence="6">Protein ENTREP2</fullName>
    </recommendedName>
    <alternativeName>
        <fullName evidence="7">Endosomal transmembrane epsin interactor 2</fullName>
    </alternativeName>
    <alternativeName>
        <fullName>Transmembrane protein 228</fullName>
    </alternativeName>
</protein>